<evidence type="ECO:0000255" key="1">
    <source>
        <dbReference type="HAMAP-Rule" id="MF_01035"/>
    </source>
</evidence>
<name>LEU3_LEIXX</name>
<dbReference type="EC" id="1.1.1.85" evidence="1"/>
<dbReference type="EMBL" id="AE016822">
    <property type="protein sequence ID" value="AAT89150.1"/>
    <property type="molecule type" value="Genomic_DNA"/>
</dbReference>
<dbReference type="RefSeq" id="WP_011186144.1">
    <property type="nucleotide sequence ID" value="NC_006087.1"/>
</dbReference>
<dbReference type="SMR" id="Q6AEP6"/>
<dbReference type="STRING" id="281090.Lxx13130"/>
<dbReference type="KEGG" id="lxx:Lxx13130"/>
<dbReference type="eggNOG" id="COG0473">
    <property type="taxonomic scope" value="Bacteria"/>
</dbReference>
<dbReference type="HOGENOM" id="CLU_031953_0_1_11"/>
<dbReference type="UniPathway" id="UPA00048">
    <property type="reaction ID" value="UER00072"/>
</dbReference>
<dbReference type="Proteomes" id="UP000001306">
    <property type="component" value="Chromosome"/>
</dbReference>
<dbReference type="GO" id="GO:0005737">
    <property type="term" value="C:cytoplasm"/>
    <property type="evidence" value="ECO:0007669"/>
    <property type="project" value="UniProtKB-SubCell"/>
</dbReference>
<dbReference type="GO" id="GO:0003862">
    <property type="term" value="F:3-isopropylmalate dehydrogenase activity"/>
    <property type="evidence" value="ECO:0007669"/>
    <property type="project" value="UniProtKB-UniRule"/>
</dbReference>
<dbReference type="GO" id="GO:0000287">
    <property type="term" value="F:magnesium ion binding"/>
    <property type="evidence" value="ECO:0007669"/>
    <property type="project" value="InterPro"/>
</dbReference>
<dbReference type="GO" id="GO:0051287">
    <property type="term" value="F:NAD binding"/>
    <property type="evidence" value="ECO:0007669"/>
    <property type="project" value="InterPro"/>
</dbReference>
<dbReference type="GO" id="GO:0009098">
    <property type="term" value="P:L-leucine biosynthetic process"/>
    <property type="evidence" value="ECO:0007669"/>
    <property type="project" value="UniProtKB-UniRule"/>
</dbReference>
<dbReference type="Gene3D" id="3.40.718.10">
    <property type="entry name" value="Isopropylmalate Dehydrogenase"/>
    <property type="match status" value="1"/>
</dbReference>
<dbReference type="HAMAP" id="MF_01035">
    <property type="entry name" value="LeuB_type2"/>
    <property type="match status" value="1"/>
</dbReference>
<dbReference type="InterPro" id="IPR050501">
    <property type="entry name" value="ICDH/IPMDH"/>
</dbReference>
<dbReference type="InterPro" id="IPR019818">
    <property type="entry name" value="IsoCit/isopropylmalate_DH_CS"/>
</dbReference>
<dbReference type="InterPro" id="IPR024084">
    <property type="entry name" value="IsoPropMal-DH-like_dom"/>
</dbReference>
<dbReference type="InterPro" id="IPR023698">
    <property type="entry name" value="LeuB_actb"/>
</dbReference>
<dbReference type="NCBIfam" id="NF002898">
    <property type="entry name" value="PRK03437.1"/>
    <property type="match status" value="1"/>
</dbReference>
<dbReference type="PANTHER" id="PTHR43275">
    <property type="entry name" value="D-MALATE DEHYDROGENASE [DECARBOXYLATING]"/>
    <property type="match status" value="1"/>
</dbReference>
<dbReference type="PANTHER" id="PTHR43275:SF1">
    <property type="entry name" value="D-MALATE DEHYDROGENASE [DECARBOXYLATING]"/>
    <property type="match status" value="1"/>
</dbReference>
<dbReference type="Pfam" id="PF00180">
    <property type="entry name" value="Iso_dh"/>
    <property type="match status" value="1"/>
</dbReference>
<dbReference type="SMART" id="SM01329">
    <property type="entry name" value="Iso_dh"/>
    <property type="match status" value="1"/>
</dbReference>
<dbReference type="SUPFAM" id="SSF53659">
    <property type="entry name" value="Isocitrate/Isopropylmalate dehydrogenase-like"/>
    <property type="match status" value="1"/>
</dbReference>
<dbReference type="PROSITE" id="PS00470">
    <property type="entry name" value="IDH_IMDH"/>
    <property type="match status" value="1"/>
</dbReference>
<comment type="function">
    <text evidence="1">Catalyzes the oxidation of 3-carboxy-2-hydroxy-4-methylpentanoate (3-isopropylmalate) to 3-carboxy-4-methyl-2-oxopentanoate. The product decarboxylates to 4-methyl-2 oxopentanoate.</text>
</comment>
<comment type="catalytic activity">
    <reaction evidence="1">
        <text>(2R,3S)-3-isopropylmalate + NAD(+) = 4-methyl-2-oxopentanoate + CO2 + NADH</text>
        <dbReference type="Rhea" id="RHEA:32271"/>
        <dbReference type="ChEBI" id="CHEBI:16526"/>
        <dbReference type="ChEBI" id="CHEBI:17865"/>
        <dbReference type="ChEBI" id="CHEBI:35121"/>
        <dbReference type="ChEBI" id="CHEBI:57540"/>
        <dbReference type="ChEBI" id="CHEBI:57945"/>
        <dbReference type="EC" id="1.1.1.85"/>
    </reaction>
</comment>
<comment type="cofactor">
    <cofactor evidence="1">
        <name>Mg(2+)</name>
        <dbReference type="ChEBI" id="CHEBI:18420"/>
    </cofactor>
    <cofactor evidence="1">
        <name>Mn(2+)</name>
        <dbReference type="ChEBI" id="CHEBI:29035"/>
    </cofactor>
    <text evidence="1">Binds 1 Mg(2+) or Mn(2+) ion per subunit.</text>
</comment>
<comment type="pathway">
    <text evidence="1">Amino-acid biosynthesis; L-leucine biosynthesis; L-leucine from 3-methyl-2-oxobutanoate: step 3/4.</text>
</comment>
<comment type="subunit">
    <text evidence="1">Homodimer.</text>
</comment>
<comment type="subcellular location">
    <subcellularLocation>
        <location evidence="1">Cytoplasm</location>
    </subcellularLocation>
</comment>
<comment type="similarity">
    <text evidence="1">Belongs to the isocitrate and isopropylmalate dehydrogenases family. LeuB type 2 subfamily.</text>
</comment>
<protein>
    <recommendedName>
        <fullName evidence="1">3-isopropylmalate dehydrogenase</fullName>
        <ecNumber evidence="1">1.1.1.85</ecNumber>
    </recommendedName>
    <alternativeName>
        <fullName evidence="1">3-IPM-DH</fullName>
    </alternativeName>
    <alternativeName>
        <fullName evidence="1">Beta-IPM dehydrogenase</fullName>
        <shortName evidence="1">IMDH</shortName>
    </alternativeName>
</protein>
<sequence length="357" mass="37438">MSRTVQLVVIPGDGIGPEVIAEAVKALDAVTAGSGLAFQKTYFSLGADRYLATGDVLTDDDLAAIRGHDAILLGAVGGRPGDPRLAGANVERGLLLRLRFSLDHYVNLRPTTLFPGIASPLAAPGEVDFVVVREGTEGQYVGNGGAIRPGTPHEVANEVSVNTAYGVERVVRYAFEQAGQRRKKLTLVHKTNVLTFAGSLWKRIVDALAAEHPEVAVDYLHVDAATIFLVTDPARFDVIVTDNLFGDILTDLAAAISGGIGLAASGNINPVGEFPSMFEPVHGSAPDIAGEQRADPTAAILSVALLLRHLGERPLAERVERAVTTDLAARSGQMATASQTRTTSQIGDAIAALAAQN</sequence>
<feature type="chain" id="PRO_0000083799" description="3-isopropylmalate dehydrogenase">
    <location>
        <begin position="1"/>
        <end position="357"/>
    </location>
</feature>
<feature type="binding site" evidence="1">
    <location>
        <position position="99"/>
    </location>
    <ligand>
        <name>substrate</name>
    </ligand>
</feature>
<feature type="binding site" evidence="1">
    <location>
        <position position="109"/>
    </location>
    <ligand>
        <name>substrate</name>
    </ligand>
</feature>
<feature type="binding site" evidence="1">
    <location>
        <position position="133"/>
    </location>
    <ligand>
        <name>substrate</name>
    </ligand>
</feature>
<feature type="binding site" evidence="1">
    <location>
        <position position="223"/>
    </location>
    <ligand>
        <name>Mg(2+)</name>
        <dbReference type="ChEBI" id="CHEBI:18420"/>
    </ligand>
</feature>
<feature type="binding site" evidence="1">
    <location>
        <position position="223"/>
    </location>
    <ligand>
        <name>substrate</name>
    </ligand>
</feature>
<feature type="binding site" evidence="1">
    <location>
        <position position="247"/>
    </location>
    <ligand>
        <name>Mg(2+)</name>
        <dbReference type="ChEBI" id="CHEBI:18420"/>
    </ligand>
</feature>
<feature type="binding site" evidence="1">
    <location>
        <position position="251"/>
    </location>
    <ligand>
        <name>Mg(2+)</name>
        <dbReference type="ChEBI" id="CHEBI:18420"/>
    </ligand>
</feature>
<feature type="binding site" evidence="1">
    <location>
        <begin position="283"/>
        <end position="295"/>
    </location>
    <ligand>
        <name>NAD(+)</name>
        <dbReference type="ChEBI" id="CHEBI:57540"/>
    </ligand>
</feature>
<feature type="site" description="Important for catalysis" evidence="1">
    <location>
        <position position="140"/>
    </location>
</feature>
<feature type="site" description="Important for catalysis" evidence="1">
    <location>
        <position position="190"/>
    </location>
</feature>
<reference key="1">
    <citation type="journal article" date="2004" name="Mol. Plant Microbe Interact.">
        <title>The genome sequence of the Gram-positive sugarcane pathogen Leifsonia xyli subsp. xyli.</title>
        <authorList>
            <person name="Monteiro-Vitorello C.B."/>
            <person name="Camargo L.E.A."/>
            <person name="Van Sluys M.A."/>
            <person name="Kitajima J.P."/>
            <person name="Truffi D."/>
            <person name="do Amaral A.M."/>
            <person name="Harakava R."/>
            <person name="de Oliveira J.C.F."/>
            <person name="Wood D."/>
            <person name="de Oliveira M.C."/>
            <person name="Miyaki C.Y."/>
            <person name="Takita M.A."/>
            <person name="da Silva A.C.R."/>
            <person name="Furlan L.R."/>
            <person name="Carraro D.M."/>
            <person name="Camarotte G."/>
            <person name="Almeida N.F. Jr."/>
            <person name="Carrer H."/>
            <person name="Coutinho L.L."/>
            <person name="El-Dorry H.A."/>
            <person name="Ferro M.I.T."/>
            <person name="Gagliardi P.R."/>
            <person name="Giglioti E."/>
            <person name="Goldman M.H.S."/>
            <person name="Goldman G.H."/>
            <person name="Kimura E.T."/>
            <person name="Ferro E.S."/>
            <person name="Kuramae E.E."/>
            <person name="Lemos E.G.M."/>
            <person name="Lemos M.V.F."/>
            <person name="Mauro S.M.Z."/>
            <person name="Machado M.A."/>
            <person name="Marino C.L."/>
            <person name="Menck C.F."/>
            <person name="Nunes L.R."/>
            <person name="Oliveira R.C."/>
            <person name="Pereira G.G."/>
            <person name="Siqueira W."/>
            <person name="de Souza A.A."/>
            <person name="Tsai S.M."/>
            <person name="Zanca A.S."/>
            <person name="Simpson A.J.G."/>
            <person name="Brumbley S.M."/>
            <person name="Setubal J.C."/>
        </authorList>
    </citation>
    <scope>NUCLEOTIDE SEQUENCE [LARGE SCALE GENOMIC DNA]</scope>
    <source>
        <strain>CTCB07</strain>
    </source>
</reference>
<keyword id="KW-0028">Amino-acid biosynthesis</keyword>
<keyword id="KW-0100">Branched-chain amino acid biosynthesis</keyword>
<keyword id="KW-0963">Cytoplasm</keyword>
<keyword id="KW-0432">Leucine biosynthesis</keyword>
<keyword id="KW-0460">Magnesium</keyword>
<keyword id="KW-0464">Manganese</keyword>
<keyword id="KW-0479">Metal-binding</keyword>
<keyword id="KW-0520">NAD</keyword>
<keyword id="KW-0560">Oxidoreductase</keyword>
<keyword id="KW-1185">Reference proteome</keyword>
<organism>
    <name type="scientific">Leifsonia xyli subsp. xyli (strain CTCB07)</name>
    <dbReference type="NCBI Taxonomy" id="281090"/>
    <lineage>
        <taxon>Bacteria</taxon>
        <taxon>Bacillati</taxon>
        <taxon>Actinomycetota</taxon>
        <taxon>Actinomycetes</taxon>
        <taxon>Micrococcales</taxon>
        <taxon>Microbacteriaceae</taxon>
        <taxon>Leifsonia</taxon>
    </lineage>
</organism>
<accession>Q6AEP6</accession>
<proteinExistence type="inferred from homology"/>
<gene>
    <name evidence="1" type="primary">leuB</name>
    <name type="ordered locus">Lxx13130</name>
</gene>